<accession>Q98631</accession>
<protein>
    <recommendedName>
        <fullName>RNA-directed RNA polymerase P1</fullName>
        <ecNumber>2.7.7.48</ecNumber>
    </recommendedName>
    <alternativeName>
        <fullName>Replicase</fullName>
    </alternativeName>
</protein>
<gene>
    <name type="primary">S1</name>
</gene>
<reference key="1">
    <citation type="journal article" date="1998" name="Wei Sheng Wu Xue Bao">
        <title>Nucleotide and protein sequence analysis of rice dwarf virus replicase.</title>
        <authorList>
            <person name="Xiao J."/>
            <person name="Li Y."/>
            <person name="Zhang J."/>
            <person name="Liu J."/>
            <person name="Chen Z."/>
        </authorList>
    </citation>
    <scope>NUCLEOTIDE SEQUENCE [GENOMIC RNA]</scope>
</reference>
<reference key="2">
    <citation type="journal article" date="2006" name="J. Gen. Virol.">
        <title>Pns12 protein of Rice dwarf virus is essential for formation of viroplasms and nucleation of viral-assembly complexes.</title>
        <authorList>
            <person name="Wei T."/>
            <person name="Shimizu T."/>
            <person name="Hagiwara K."/>
            <person name="Kikuchi A."/>
            <person name="Moriyasu Y."/>
            <person name="Suzuki N."/>
            <person name="Chen H."/>
            <person name="Omura T."/>
        </authorList>
    </citation>
    <scope>SUBCELLULAR LOCATION</scope>
</reference>
<reference key="3">
    <citation type="journal article" date="2010" name="J. Biochem.">
        <title>The functional organization of the internal components of Rice dwarf virus.</title>
        <authorList>
            <person name="Miyazaki N."/>
            <person name="Wu B."/>
            <person name="Hagiwara K."/>
            <person name="Wang C.Y."/>
            <person name="Xing L."/>
            <person name="Hammar L."/>
            <person name="Higashiura A."/>
            <person name="Tsukihara T."/>
            <person name="Nakagawa A."/>
            <person name="Omura T."/>
            <person name="Cheng R.H."/>
        </authorList>
    </citation>
    <scope>FUNCTION</scope>
    <scope>SUBCELLULAR LOCATION</scope>
</reference>
<sequence length="1444" mass="164422">MDLARSDIIPHLLCLFQEIIQANIQKVSEAYDLELKIMNILTLWRNGSDNLISDNDDYMKKGLFFSRSNDPLALQARYARMYDDLFKLNNYEVPDDVVRRHDNKILDIILKESSVPFWYDISDDEAHESMLPEFRLQDIHEFRLNLKRVRVVPDESEEIQMDESQSDKRRRKKRMEKSRPVWLSGSESDRRIELNDSLKPSQKFETKLSSYLLNRLMNEMNPHYCGHPLPALFVTLIMLKAYSIKNKFFSYGIRYMELVCNEIAGPDLNTRTFPVLFGSDGSFVGTRVYSHYPIKLRMILNDLTYLLTYSDLHKFQEFELDVNDEVLLHMLRTPNDGRQLKKAVTRLNHYYGLKFNPKTTDCGVVNGMDFTHKHPITKTADFTSPVLPMTNSFNKAEICYGHNSKILNRAVFTDTVRGHIREDLKNVADLDLPKLYEHVSKLVDMRVNYTIIYDLMFLRVMLNLGGYSRSNQITDFRKTIDEITKMNEGFLSGADPEKNIDTLNAWMAPTMEDCGYRLTKSILFGKFRKAKYPSDLEAKSNIDYYVTARSAGIGNLRISIETDKRKYKVRTTSKSAFVNAMGSGILDVNPVSNEPMMLTDYLLTQTPETRANLEAAIDSGSKSDSELMRILGQNSIGSRSTTAWRPVRPIYINVLQAHLAQAFIIGPHINATVNQHEYQPTSLWFTGDDLGVGFATLYQSGTADIIVPAIEASSTGKALSVLADCSSWDQTYLTATMIPYYNGIKRALLEYQQADMRNFYMIDSGRTGVPGMKLSEIVDWFNSFQTKRIFNASYLKERHSFVVKYMWSGRLDTFFMNSVQNALITRRIAEEVSLRVSNTGLSWFQVAGDDAIMVYDGSSISTTEQVTRINEITVRNYEESNHIINPQKTVISHISGEYAKIYYYAGMHFRDPSIQLHESEKDSGASDVTESLREFGQVIYEYNKRAIGTLRVNALYGRLIAGLAYSVNCPQYDASKRTYANMKYYPPPTSVIAPAAFKGGLGLSFTGLSLNEVLFIKLHLHEAVSQGLHVISMISFEANEVVSNSLSAYYLKDQKDLLRDMKLGKHLEKVKGISFKSSDLAFSGSDFSQGLNLKRESIDKVKLEVSRKSIRDLRSSGISVPSTHAYENLPYASLHQSFKSLKVDRDTSKFTNERLLVSLLEYKSDIPRVSVTSQYPVYDLINISKVDELNVRSGGPVRFISAPIEGKLLEENIGTRQGVQFKNRGYGGSQEVLHFIRSNGLVITEQALIDLIIKSGVLLMINPQRGLIDLFQSLSGDTASSMHLANFFMAEKPHWEDNAISLTIAGSLLENCDSRIENVKNFVSVLATGMQKDLQRMFYYVGFVYYAQRLIWSGGHSSKIFVSIDEDKLADFLRGSKPITRRRKAMAGTKREPINLSANFSYEISEPDREISEYDPLILCHPLSMPFFGNWQEKYSVMQSDEQM</sequence>
<organism>
    <name type="scientific">Rice dwarf virus (isolate Fujian)</name>
    <name type="common">RDV</name>
    <dbReference type="NCBI Taxonomy" id="142804"/>
    <lineage>
        <taxon>Viruses</taxon>
        <taxon>Riboviria</taxon>
        <taxon>Orthornavirae</taxon>
        <taxon>Duplornaviricota</taxon>
        <taxon>Resentoviricetes</taxon>
        <taxon>Reovirales</taxon>
        <taxon>Sedoreoviridae</taxon>
        <taxon>Phytoreovirus</taxon>
        <taxon>Rice dwarf virus</taxon>
    </lineage>
</organism>
<dbReference type="EC" id="2.7.7.48"/>
<dbReference type="EMBL" id="U73201">
    <property type="protein sequence ID" value="AAB18743.1"/>
    <property type="molecule type" value="Genomic_RNA"/>
</dbReference>
<dbReference type="RefSeq" id="NP_620544.1">
    <property type="nucleotide sequence ID" value="NC_003773.1"/>
</dbReference>
<dbReference type="KEGG" id="vg:956505"/>
<dbReference type="Proteomes" id="UP000002239">
    <property type="component" value="Genome"/>
</dbReference>
<dbReference type="GO" id="GO:0030430">
    <property type="term" value="C:host cell cytoplasm"/>
    <property type="evidence" value="ECO:0007669"/>
    <property type="project" value="UniProtKB-SubCell"/>
</dbReference>
<dbReference type="GO" id="GO:0044423">
    <property type="term" value="C:virion component"/>
    <property type="evidence" value="ECO:0007669"/>
    <property type="project" value="UniProtKB-KW"/>
</dbReference>
<dbReference type="GO" id="GO:0000166">
    <property type="term" value="F:nucleotide binding"/>
    <property type="evidence" value="ECO:0007669"/>
    <property type="project" value="UniProtKB-KW"/>
</dbReference>
<dbReference type="GO" id="GO:0003723">
    <property type="term" value="F:RNA binding"/>
    <property type="evidence" value="ECO:0007669"/>
    <property type="project" value="InterPro"/>
</dbReference>
<dbReference type="GO" id="GO:0003968">
    <property type="term" value="F:RNA-directed RNA polymerase activity"/>
    <property type="evidence" value="ECO:0007669"/>
    <property type="project" value="UniProtKB-KW"/>
</dbReference>
<dbReference type="GO" id="GO:0019079">
    <property type="term" value="P:viral genome replication"/>
    <property type="evidence" value="ECO:0007669"/>
    <property type="project" value="InterPro"/>
</dbReference>
<dbReference type="InterPro" id="IPR043502">
    <property type="entry name" value="DNA/RNA_pol_sf"/>
</dbReference>
<dbReference type="InterPro" id="IPR007097">
    <property type="entry name" value="RNA-dir_pol_reovirus"/>
</dbReference>
<dbReference type="InterPro" id="IPR014383">
    <property type="entry name" value="RNA-dir_poll_phytoreovirus"/>
</dbReference>
<dbReference type="PIRSF" id="PIRSF000822">
    <property type="entry name" value="RdRPol_RDV"/>
    <property type="match status" value="1"/>
</dbReference>
<dbReference type="SUPFAM" id="SSF56672">
    <property type="entry name" value="DNA/RNA polymerases"/>
    <property type="match status" value="1"/>
</dbReference>
<dbReference type="PROSITE" id="PS50523">
    <property type="entry name" value="RDRP_DSRNA_REO"/>
    <property type="match status" value="1"/>
</dbReference>
<feature type="chain" id="PRO_0000222778" description="RNA-directed RNA polymerase P1">
    <location>
        <begin position="1"/>
        <end position="1444"/>
    </location>
</feature>
<feature type="domain" description="RdRp catalytic" evidence="1">
    <location>
        <begin position="690"/>
        <end position="897"/>
    </location>
</feature>
<feature type="region of interest" description="Disordered" evidence="2">
    <location>
        <begin position="156"/>
        <end position="182"/>
    </location>
</feature>
<comment type="function">
    <text evidence="1 4">RNA-directed RNA polymerase that is involved in both transcription and genome replication. Together with the capping enzyme P5 and protein P7, forms an enzyme complex positioned near the channels situated at each of the five-fold vertices of the core.</text>
</comment>
<comment type="catalytic activity">
    <reaction evidence="1">
        <text>RNA(n) + a ribonucleoside 5'-triphosphate = RNA(n+1) + diphosphate</text>
        <dbReference type="Rhea" id="RHEA:21248"/>
        <dbReference type="Rhea" id="RHEA-COMP:14527"/>
        <dbReference type="Rhea" id="RHEA-COMP:17342"/>
        <dbReference type="ChEBI" id="CHEBI:33019"/>
        <dbReference type="ChEBI" id="CHEBI:61557"/>
        <dbReference type="ChEBI" id="CHEBI:140395"/>
        <dbReference type="EC" id="2.7.7.48"/>
    </reaction>
</comment>
<comment type="subcellular location">
    <subcellularLocation>
        <location evidence="4">Virion</location>
    </subcellularLocation>
    <subcellularLocation>
        <location evidence="3">Host cytoplasm</location>
    </subcellularLocation>
    <text evidence="4 5">Located inside the inner capsid (PubMed:20190042). Found in the interior of spherical cytoplasmic structures, called virus factories, that appear early after infection and are the site of viral replication and packaging.</text>
</comment>
<comment type="similarity">
    <text evidence="5">Belongs to the reoviridae RNA-directed RNA polymerase family.</text>
</comment>
<keyword id="KW-1035">Host cytoplasm</keyword>
<keyword id="KW-0547">Nucleotide-binding</keyword>
<keyword id="KW-0548">Nucleotidyltransferase</keyword>
<keyword id="KW-1185">Reference proteome</keyword>
<keyword id="KW-0696">RNA-directed RNA polymerase</keyword>
<keyword id="KW-0808">Transferase</keyword>
<keyword id="KW-0693">Viral RNA replication</keyword>
<keyword id="KW-0946">Virion</keyword>
<proteinExistence type="inferred from homology"/>
<name>RDRP_RDVF</name>
<organismHost>
    <name type="scientific">Alopecurus aequalis</name>
    <dbReference type="NCBI Taxonomy" id="114194"/>
</organismHost>
<organismHost>
    <name type="scientific">Echinochloa crus-galli</name>
    <name type="common">Barnyard grass</name>
    <name type="synonym">Panicum crus-galli</name>
    <dbReference type="NCBI Taxonomy" id="90397"/>
</organismHost>
<organismHost>
    <name type="scientific">Nephotettix cincticeps</name>
    <name type="common">Green rice leafhopper</name>
    <name type="synonym">Selenocephalus cincticeps</name>
    <dbReference type="NCBI Taxonomy" id="94400"/>
</organismHost>
<organismHost>
    <name type="scientific">Oryza sativa</name>
    <name type="common">Rice</name>
    <dbReference type="NCBI Taxonomy" id="4530"/>
</organismHost>
<organismHost>
    <name type="scientific">Paspalum</name>
    <dbReference type="NCBI Taxonomy" id="147271"/>
</organismHost>
<evidence type="ECO:0000255" key="1">
    <source>
        <dbReference type="PROSITE-ProRule" id="PRU00539"/>
    </source>
</evidence>
<evidence type="ECO:0000256" key="2">
    <source>
        <dbReference type="SAM" id="MobiDB-lite"/>
    </source>
</evidence>
<evidence type="ECO:0000269" key="3">
    <source>
    </source>
</evidence>
<evidence type="ECO:0000269" key="4">
    <source>
    </source>
</evidence>
<evidence type="ECO:0000305" key="5"/>